<gene>
    <name type="ORF">DDB_G0289029</name>
</gene>
<accession>Q54I39</accession>
<organism>
    <name type="scientific">Dictyostelium discoideum</name>
    <name type="common">Social amoeba</name>
    <dbReference type="NCBI Taxonomy" id="44689"/>
    <lineage>
        <taxon>Eukaryota</taxon>
        <taxon>Amoebozoa</taxon>
        <taxon>Evosea</taxon>
        <taxon>Eumycetozoa</taxon>
        <taxon>Dictyostelia</taxon>
        <taxon>Dictyosteliales</taxon>
        <taxon>Dictyosteliaceae</taxon>
        <taxon>Dictyostelium</taxon>
    </lineage>
</organism>
<feature type="chain" id="PRO_0000327596" description="IST1-like protein">
    <location>
        <begin position="1"/>
        <end position="369"/>
    </location>
</feature>
<feature type="region of interest" description="Disordered" evidence="2">
    <location>
        <begin position="224"/>
        <end position="354"/>
    </location>
</feature>
<feature type="coiled-coil region" evidence="1">
    <location>
        <begin position="12"/>
        <end position="59"/>
    </location>
</feature>
<feature type="compositionally biased region" description="Low complexity" evidence="2">
    <location>
        <begin position="225"/>
        <end position="239"/>
    </location>
</feature>
<feature type="compositionally biased region" description="Low complexity" evidence="2">
    <location>
        <begin position="246"/>
        <end position="270"/>
    </location>
</feature>
<feature type="compositionally biased region" description="Polar residues" evidence="2">
    <location>
        <begin position="277"/>
        <end position="305"/>
    </location>
</feature>
<feature type="compositionally biased region" description="Low complexity" evidence="2">
    <location>
        <begin position="306"/>
        <end position="337"/>
    </location>
</feature>
<proteinExistence type="inferred from homology"/>
<evidence type="ECO:0000255" key="1"/>
<evidence type="ECO:0000256" key="2">
    <source>
        <dbReference type="SAM" id="MobiDB-lite"/>
    </source>
</evidence>
<evidence type="ECO:0000305" key="3"/>
<reference key="1">
    <citation type="journal article" date="2005" name="Nature">
        <title>The genome of the social amoeba Dictyostelium discoideum.</title>
        <authorList>
            <person name="Eichinger L."/>
            <person name="Pachebat J.A."/>
            <person name="Gloeckner G."/>
            <person name="Rajandream M.A."/>
            <person name="Sucgang R."/>
            <person name="Berriman M."/>
            <person name="Song J."/>
            <person name="Olsen R."/>
            <person name="Szafranski K."/>
            <person name="Xu Q."/>
            <person name="Tunggal B."/>
            <person name="Kummerfeld S."/>
            <person name="Madera M."/>
            <person name="Konfortov B.A."/>
            <person name="Rivero F."/>
            <person name="Bankier A.T."/>
            <person name="Lehmann R."/>
            <person name="Hamlin N."/>
            <person name="Davies R."/>
            <person name="Gaudet P."/>
            <person name="Fey P."/>
            <person name="Pilcher K."/>
            <person name="Chen G."/>
            <person name="Saunders D."/>
            <person name="Sodergren E.J."/>
            <person name="Davis P."/>
            <person name="Kerhornou A."/>
            <person name="Nie X."/>
            <person name="Hall N."/>
            <person name="Anjard C."/>
            <person name="Hemphill L."/>
            <person name="Bason N."/>
            <person name="Farbrother P."/>
            <person name="Desany B."/>
            <person name="Just E."/>
            <person name="Morio T."/>
            <person name="Rost R."/>
            <person name="Churcher C.M."/>
            <person name="Cooper J."/>
            <person name="Haydock S."/>
            <person name="van Driessche N."/>
            <person name="Cronin A."/>
            <person name="Goodhead I."/>
            <person name="Muzny D.M."/>
            <person name="Mourier T."/>
            <person name="Pain A."/>
            <person name="Lu M."/>
            <person name="Harper D."/>
            <person name="Lindsay R."/>
            <person name="Hauser H."/>
            <person name="James K.D."/>
            <person name="Quiles M."/>
            <person name="Madan Babu M."/>
            <person name="Saito T."/>
            <person name="Buchrieser C."/>
            <person name="Wardroper A."/>
            <person name="Felder M."/>
            <person name="Thangavelu M."/>
            <person name="Johnson D."/>
            <person name="Knights A."/>
            <person name="Loulseged H."/>
            <person name="Mungall K.L."/>
            <person name="Oliver K."/>
            <person name="Price C."/>
            <person name="Quail M.A."/>
            <person name="Urushihara H."/>
            <person name="Hernandez J."/>
            <person name="Rabbinowitsch E."/>
            <person name="Steffen D."/>
            <person name="Sanders M."/>
            <person name="Ma J."/>
            <person name="Kohara Y."/>
            <person name="Sharp S."/>
            <person name="Simmonds M.N."/>
            <person name="Spiegler S."/>
            <person name="Tivey A."/>
            <person name="Sugano S."/>
            <person name="White B."/>
            <person name="Walker D."/>
            <person name="Woodward J.R."/>
            <person name="Winckler T."/>
            <person name="Tanaka Y."/>
            <person name="Shaulsky G."/>
            <person name="Schleicher M."/>
            <person name="Weinstock G.M."/>
            <person name="Rosenthal A."/>
            <person name="Cox E.C."/>
            <person name="Chisholm R.L."/>
            <person name="Gibbs R.A."/>
            <person name="Loomis W.F."/>
            <person name="Platzer M."/>
            <person name="Kay R.R."/>
            <person name="Williams J.G."/>
            <person name="Dear P.H."/>
            <person name="Noegel A.A."/>
            <person name="Barrell B.G."/>
            <person name="Kuspa A."/>
        </authorList>
    </citation>
    <scope>NUCLEOTIDE SEQUENCE [LARGE SCALE GENOMIC DNA]</scope>
    <source>
        <strain>AX4</strain>
    </source>
</reference>
<dbReference type="EMBL" id="AAFI02000129">
    <property type="protein sequence ID" value="EAL62930.1"/>
    <property type="molecule type" value="Genomic_DNA"/>
</dbReference>
<dbReference type="RefSeq" id="XP_636432.1">
    <property type="nucleotide sequence ID" value="XM_631340.1"/>
</dbReference>
<dbReference type="SMR" id="Q54I39"/>
<dbReference type="STRING" id="44689.Q54I39"/>
<dbReference type="PaxDb" id="44689-DDB0304889"/>
<dbReference type="EnsemblProtists" id="EAL62930">
    <property type="protein sequence ID" value="EAL62930"/>
    <property type="gene ID" value="DDB_G0289029"/>
</dbReference>
<dbReference type="GeneID" id="8626924"/>
<dbReference type="KEGG" id="ddi:DDB_G0289029"/>
<dbReference type="dictyBase" id="DDB_G0289029"/>
<dbReference type="VEuPathDB" id="AmoebaDB:DDB_G0289029"/>
<dbReference type="eggNOG" id="KOG2027">
    <property type="taxonomic scope" value="Eukaryota"/>
</dbReference>
<dbReference type="HOGENOM" id="CLU_037652_0_0_1"/>
<dbReference type="InParanoid" id="Q54I39"/>
<dbReference type="OMA" id="YQPFPNI"/>
<dbReference type="Reactome" id="R-DDI-6798695">
    <property type="pathway name" value="Neutrophil degranulation"/>
</dbReference>
<dbReference type="Reactome" id="R-DDI-9668328">
    <property type="pathway name" value="Sealing of the nuclear envelope (NE) by ESCRT-III"/>
</dbReference>
<dbReference type="PRO" id="PR:Q54I39"/>
<dbReference type="Proteomes" id="UP000002195">
    <property type="component" value="Chromosome 5"/>
</dbReference>
<dbReference type="GO" id="GO:0008104">
    <property type="term" value="P:protein localization"/>
    <property type="evidence" value="ECO:0000318"/>
    <property type="project" value="GO_Central"/>
</dbReference>
<dbReference type="GO" id="GO:0015031">
    <property type="term" value="P:protein transport"/>
    <property type="evidence" value="ECO:0007669"/>
    <property type="project" value="InterPro"/>
</dbReference>
<dbReference type="FunFam" id="1.20.1260.60:FF:000002">
    <property type="entry name" value="Vacuolar protein sorting-associated protein IST1"/>
    <property type="match status" value="1"/>
</dbReference>
<dbReference type="Gene3D" id="1.20.1260.60">
    <property type="entry name" value="Vacuolar protein sorting-associated protein Ist1"/>
    <property type="match status" value="1"/>
</dbReference>
<dbReference type="InterPro" id="IPR005061">
    <property type="entry name" value="Ist1"/>
</dbReference>
<dbReference type="InterPro" id="IPR042277">
    <property type="entry name" value="IST1-like"/>
</dbReference>
<dbReference type="PANTHER" id="PTHR12161">
    <property type="entry name" value="IST1 FAMILY MEMBER"/>
    <property type="match status" value="1"/>
</dbReference>
<dbReference type="PANTHER" id="PTHR12161:SF5">
    <property type="entry name" value="IST1 HOMOLOG"/>
    <property type="match status" value="1"/>
</dbReference>
<dbReference type="Pfam" id="PF03398">
    <property type="entry name" value="Ist1"/>
    <property type="match status" value="1"/>
</dbReference>
<keyword id="KW-0175">Coiled coil</keyword>
<keyword id="KW-1185">Reference proteome</keyword>
<comment type="similarity">
    <text evidence="3">Belongs to the IST1 family.</text>
</comment>
<sequence length="369" mass="42515">MFGFGPSYDSYKLKVQLKLAVSRIQILKNKKANIVRDEKRNVAELLRKKNEESARIRVETIIRDEYLIECFQIIEVLCELLHARINLINATTEMPLEMKESIFTLVYSSQRIQIPELEQIKNQLKAKYGKGLENEANCHCSTHVNPKIVHKLSYATPDPSIIFQTLSEIAEKFNVDWCGSDYPPPPQLIMPQPIIVQQQPQILQPPPQIIHHQQQPQILQPPPQIIQQQQQPQMPSFPIMSPPQQPTFSQIQHQQQIQQQYQQQQQSPQFPSAPPSFYNNNSGNQTPQFPTISTNNSDGYSNDKFNNGNNNYNNNNNNNNNNNNNNNHNNNNNNNNNIPPPYQPSSDTGYPDYDELTARFEALKRSNDF</sequence>
<name>IST1L_DICDI</name>
<protein>
    <recommendedName>
        <fullName>IST1-like protein</fullName>
    </recommendedName>
</protein>